<proteinExistence type="inferred from homology"/>
<feature type="chain" id="PRO_1000123227" description="N-acetyl-gamma-glutamyl-phosphate reductase">
    <location>
        <begin position="1"/>
        <end position="343"/>
    </location>
</feature>
<feature type="active site" evidence="1">
    <location>
        <position position="148"/>
    </location>
</feature>
<reference key="1">
    <citation type="submission" date="2009-01" db="EMBL/GenBank/DDBJ databases">
        <title>Complete sequence of chromosome of Caldicellulosiruptor becscii DSM 6725.</title>
        <authorList>
            <person name="Lucas S."/>
            <person name="Copeland A."/>
            <person name="Lapidus A."/>
            <person name="Glavina del Rio T."/>
            <person name="Tice H."/>
            <person name="Bruce D."/>
            <person name="Goodwin L."/>
            <person name="Pitluck S."/>
            <person name="Sims D."/>
            <person name="Meincke L."/>
            <person name="Brettin T."/>
            <person name="Detter J.C."/>
            <person name="Han C."/>
            <person name="Larimer F."/>
            <person name="Land M."/>
            <person name="Hauser L."/>
            <person name="Kyrpides N."/>
            <person name="Ovchinnikova G."/>
            <person name="Kataeva I."/>
            <person name="Adams M.W.W."/>
        </authorList>
    </citation>
    <scope>NUCLEOTIDE SEQUENCE [LARGE SCALE GENOMIC DNA]</scope>
    <source>
        <strain>ATCC BAA-1888 / DSM 6725 / KCTC 15123 / Z-1320</strain>
    </source>
</reference>
<dbReference type="EC" id="1.2.1.38" evidence="1"/>
<dbReference type="EMBL" id="CP001393">
    <property type="protein sequence ID" value="ACM60180.1"/>
    <property type="molecule type" value="Genomic_DNA"/>
</dbReference>
<dbReference type="RefSeq" id="WP_015907589.1">
    <property type="nucleotide sequence ID" value="NC_012034.1"/>
</dbReference>
<dbReference type="SMR" id="B9MR76"/>
<dbReference type="STRING" id="521460.Athe_1079"/>
<dbReference type="GeneID" id="31772430"/>
<dbReference type="KEGG" id="ate:Athe_1079"/>
<dbReference type="eggNOG" id="COG0002">
    <property type="taxonomic scope" value="Bacteria"/>
</dbReference>
<dbReference type="HOGENOM" id="CLU_006384_0_1_9"/>
<dbReference type="UniPathway" id="UPA00068">
    <property type="reaction ID" value="UER00108"/>
</dbReference>
<dbReference type="Proteomes" id="UP000007723">
    <property type="component" value="Chromosome"/>
</dbReference>
<dbReference type="GO" id="GO:0005737">
    <property type="term" value="C:cytoplasm"/>
    <property type="evidence" value="ECO:0007669"/>
    <property type="project" value="UniProtKB-SubCell"/>
</dbReference>
<dbReference type="GO" id="GO:0003942">
    <property type="term" value="F:N-acetyl-gamma-glutamyl-phosphate reductase activity"/>
    <property type="evidence" value="ECO:0007669"/>
    <property type="project" value="UniProtKB-UniRule"/>
</dbReference>
<dbReference type="GO" id="GO:0051287">
    <property type="term" value="F:NAD binding"/>
    <property type="evidence" value="ECO:0007669"/>
    <property type="project" value="InterPro"/>
</dbReference>
<dbReference type="GO" id="GO:0070401">
    <property type="term" value="F:NADP+ binding"/>
    <property type="evidence" value="ECO:0007669"/>
    <property type="project" value="InterPro"/>
</dbReference>
<dbReference type="GO" id="GO:0006526">
    <property type="term" value="P:L-arginine biosynthetic process"/>
    <property type="evidence" value="ECO:0007669"/>
    <property type="project" value="UniProtKB-UniRule"/>
</dbReference>
<dbReference type="CDD" id="cd23934">
    <property type="entry name" value="AGPR_1_C"/>
    <property type="match status" value="1"/>
</dbReference>
<dbReference type="CDD" id="cd17895">
    <property type="entry name" value="AGPR_1_N"/>
    <property type="match status" value="1"/>
</dbReference>
<dbReference type="FunFam" id="3.30.360.10:FF:000014">
    <property type="entry name" value="N-acetyl-gamma-glutamyl-phosphate reductase"/>
    <property type="match status" value="1"/>
</dbReference>
<dbReference type="Gene3D" id="3.30.360.10">
    <property type="entry name" value="Dihydrodipicolinate Reductase, domain 2"/>
    <property type="match status" value="1"/>
</dbReference>
<dbReference type="Gene3D" id="3.40.50.720">
    <property type="entry name" value="NAD(P)-binding Rossmann-like Domain"/>
    <property type="match status" value="1"/>
</dbReference>
<dbReference type="HAMAP" id="MF_00150">
    <property type="entry name" value="ArgC_type1"/>
    <property type="match status" value="1"/>
</dbReference>
<dbReference type="InterPro" id="IPR023013">
    <property type="entry name" value="AGPR_AS"/>
</dbReference>
<dbReference type="InterPro" id="IPR000706">
    <property type="entry name" value="AGPR_type-1"/>
</dbReference>
<dbReference type="InterPro" id="IPR036291">
    <property type="entry name" value="NAD(P)-bd_dom_sf"/>
</dbReference>
<dbReference type="InterPro" id="IPR050085">
    <property type="entry name" value="NAGSA_dehydrogenase"/>
</dbReference>
<dbReference type="InterPro" id="IPR000534">
    <property type="entry name" value="Semialdehyde_DH_NAD-bd"/>
</dbReference>
<dbReference type="NCBIfam" id="TIGR01850">
    <property type="entry name" value="argC"/>
    <property type="match status" value="1"/>
</dbReference>
<dbReference type="PANTHER" id="PTHR32338:SF10">
    <property type="entry name" value="N-ACETYL-GAMMA-GLUTAMYL-PHOSPHATE REDUCTASE, CHLOROPLASTIC-RELATED"/>
    <property type="match status" value="1"/>
</dbReference>
<dbReference type="PANTHER" id="PTHR32338">
    <property type="entry name" value="N-ACETYL-GAMMA-GLUTAMYL-PHOSPHATE REDUCTASE, CHLOROPLASTIC-RELATED-RELATED"/>
    <property type="match status" value="1"/>
</dbReference>
<dbReference type="Pfam" id="PF01118">
    <property type="entry name" value="Semialdhyde_dh"/>
    <property type="match status" value="1"/>
</dbReference>
<dbReference type="Pfam" id="PF22698">
    <property type="entry name" value="Semialdhyde_dhC_1"/>
    <property type="match status" value="1"/>
</dbReference>
<dbReference type="SMART" id="SM00859">
    <property type="entry name" value="Semialdhyde_dh"/>
    <property type="match status" value="1"/>
</dbReference>
<dbReference type="SUPFAM" id="SSF55347">
    <property type="entry name" value="Glyceraldehyde-3-phosphate dehydrogenase-like, C-terminal domain"/>
    <property type="match status" value="1"/>
</dbReference>
<dbReference type="SUPFAM" id="SSF51735">
    <property type="entry name" value="NAD(P)-binding Rossmann-fold domains"/>
    <property type="match status" value="1"/>
</dbReference>
<dbReference type="PROSITE" id="PS01224">
    <property type="entry name" value="ARGC"/>
    <property type="match status" value="1"/>
</dbReference>
<gene>
    <name evidence="1" type="primary">argC</name>
    <name type="ordered locus">Athe_1079</name>
</gene>
<name>ARGC_CALBD</name>
<comment type="function">
    <text evidence="1">Catalyzes the NADPH-dependent reduction of N-acetyl-5-glutamyl phosphate to yield N-acetyl-L-glutamate 5-semialdehyde.</text>
</comment>
<comment type="catalytic activity">
    <reaction evidence="1">
        <text>N-acetyl-L-glutamate 5-semialdehyde + phosphate + NADP(+) = N-acetyl-L-glutamyl 5-phosphate + NADPH + H(+)</text>
        <dbReference type="Rhea" id="RHEA:21588"/>
        <dbReference type="ChEBI" id="CHEBI:15378"/>
        <dbReference type="ChEBI" id="CHEBI:29123"/>
        <dbReference type="ChEBI" id="CHEBI:43474"/>
        <dbReference type="ChEBI" id="CHEBI:57783"/>
        <dbReference type="ChEBI" id="CHEBI:57936"/>
        <dbReference type="ChEBI" id="CHEBI:58349"/>
        <dbReference type="EC" id="1.2.1.38"/>
    </reaction>
</comment>
<comment type="pathway">
    <text evidence="1">Amino-acid biosynthesis; L-arginine biosynthesis; N(2)-acetyl-L-ornithine from L-glutamate: step 3/4.</text>
</comment>
<comment type="subcellular location">
    <subcellularLocation>
        <location evidence="1">Cytoplasm</location>
    </subcellularLocation>
</comment>
<comment type="similarity">
    <text evidence="1">Belongs to the NAGSA dehydrogenase family. Type 1 subfamily.</text>
</comment>
<organism>
    <name type="scientific">Caldicellulosiruptor bescii (strain ATCC BAA-1888 / DSM 6725 / KCTC 15123 / Z-1320)</name>
    <name type="common">Anaerocellum thermophilum</name>
    <dbReference type="NCBI Taxonomy" id="521460"/>
    <lineage>
        <taxon>Bacteria</taxon>
        <taxon>Bacillati</taxon>
        <taxon>Bacillota</taxon>
        <taxon>Bacillota incertae sedis</taxon>
        <taxon>Caldicellulosiruptorales</taxon>
        <taxon>Caldicellulosiruptoraceae</taxon>
        <taxon>Caldicellulosiruptor</taxon>
    </lineage>
</organism>
<evidence type="ECO:0000255" key="1">
    <source>
        <dbReference type="HAMAP-Rule" id="MF_00150"/>
    </source>
</evidence>
<keyword id="KW-0028">Amino-acid biosynthesis</keyword>
<keyword id="KW-0055">Arginine biosynthesis</keyword>
<keyword id="KW-0963">Cytoplasm</keyword>
<keyword id="KW-0521">NADP</keyword>
<keyword id="KW-0560">Oxidoreductase</keyword>
<accession>B9MR76</accession>
<protein>
    <recommendedName>
        <fullName evidence="1">N-acetyl-gamma-glutamyl-phosphate reductase</fullName>
        <shortName evidence="1">AGPR</shortName>
        <ecNumber evidence="1">1.2.1.38</ecNumber>
    </recommendedName>
    <alternativeName>
        <fullName evidence="1">N-acetyl-glutamate semialdehyde dehydrogenase</fullName>
        <shortName evidence="1">NAGSA dehydrogenase</shortName>
    </alternativeName>
</protein>
<sequence>MIKASIIGASGYVGVELIRLLLRHPEVEIVSIISSSSNQLSIDKTNPQFKKVSNLVFEEFKIEAIQEADVVFCALPHGISQEYVKIGYDIGKVVIDLSADFRYKDLQRYAKDYSQHKYPELLSKSAYGLCEINREEIKNAQIIGNPGCYPTSAILGLAPLLKNKLVDKNSIIIDSKSGVSGAGKKFDFAYSFCELDENFKAYSVTKHRHTSEIEEKCSFLFGEDLNLSFTPHLLPVKRGILSTIYANLIKKIDKNDLVEIYNEFYKDEYFIRIFEDELPELKYVRGTNFVDIGFEVDKKTNRVIIISCIDNLIKGAAGQAIQNMNIKFSLDEKMGLIMVGEYF</sequence>